<protein>
    <recommendedName>
        <fullName>Large delta antigen</fullName>
        <shortName>L-HDAg</shortName>
    </recommendedName>
    <alternativeName>
        <fullName>p27</fullName>
    </alternativeName>
</protein>
<name>LHDAG_HDVWO</name>
<organismHost>
    <name type="scientific">Homo sapiens</name>
    <name type="common">Human</name>
    <dbReference type="NCBI Taxonomy" id="9606"/>
</organismHost>
<keyword id="KW-0007">Acetylation</keyword>
<keyword id="KW-1048">Host nucleus</keyword>
<keyword id="KW-0449">Lipoprotein</keyword>
<keyword id="KW-0488">Methylation</keyword>
<keyword id="KW-0597">Phosphoprotein</keyword>
<keyword id="KW-0636">Prenylation</keyword>
<keyword id="KW-0691">RNA editing</keyword>
<keyword id="KW-0694">RNA-binding</keyword>
<keyword id="KW-1163">Viral penetration into host nucleus</keyword>
<keyword id="KW-0946">Virion</keyword>
<keyword id="KW-1160">Virus entry into host cell</keyword>
<sequence>MSRSESRKNRGGREEILEQWVAGRKKLEELERDLRKTKKKLKKIEDENPWLGNIKGILGKKDKDGEGAPPAKRARTDQMEVDSGPRKRPLRGGFTDKERQDHRRRKALENKKKQLSAGGKNLSKEEEEELRRLTEEDERRERRVAGPPVGGVNPLEGGSRGAPGGGFVPNLQGVPESPFSRTGEGLDIRGNQGFPWDILFPADPPFSPQSCRPQ</sequence>
<accession>P0C6M9</accession>
<comment type="function">
    <text evidence="1">Following virus entry into host cell, provides nuclear import of HDV RNPs thanks to its nuclear localization signal. Needs co-infection with hepatitis B virus to provide surface proteins, otherwise there is no packaging or budding. Packages the HDV ribonucleoprotein in hepatitis B virus empty particles. Interacts with both HDV genomic RNA and cytoplasmic tail of HBsAg. May inhibit viral RNA replication (By similarity).</text>
</comment>
<comment type="subunit">
    <text evidence="1">Homodimer. Homooctamer. Interacts with HBV HBsAg. May interact with clathrin to induce virion budding (By similarity).</text>
</comment>
<comment type="subcellular location">
    <subcellularLocation>
        <location>Virion</location>
    </subcellularLocation>
    <subcellularLocation>
        <location>Host nucleus</location>
        <location>Host nucleolus</location>
    </subcellularLocation>
    <text evidence="1">isoprenylated in the cytoplasm, and translocates in the nucleus possibly after phosphorylation. Translocates after to nuclear speckle, then to the ER membrane where interaction with Hepatitis B virus antigene takes place (By similarity).</text>
</comment>
<comment type="PTM">
    <text evidence="1">Prenylated by host farnesyl-transferase in the cytoplasm prior to nucleus translocation.</text>
</comment>
<comment type="PTM">
    <text evidence="1">Phosphorylated at serines by host CK2 and other kinases. phosphorylation does not seem to be important for its function (By similarity).</text>
</comment>
<comment type="RNA editing">
    <location>
        <position position="196" evidence="7"/>
    </location>
    <text evidence="1">Partially edited. RNA editing at this position occurs on the antigenomic strand and consists of a conversion of A to G catalyzed by the cellular enzyme ADAR1. The unedited RNA version gives rise to the small delta antigen (AC P29997), which ends with a nonsense codon at position 196. In the edited version, this amber codon is modified to a tryptophan codon and gives rise to the large delta antigen protein. S-HDAg suppresses editing of non-replicating antigenomic RNA, thereby regulating the extent of editing (By similarity).</text>
</comment>
<comment type="miscellaneous">
    <text>This strain belongs to the genotype I found in North America, Europe, Africa, East and West Asia and the South Pacific.</text>
</comment>
<comment type="similarity">
    <text evidence="8">Belongs to the hepatitis delta antigen family.</text>
</comment>
<organism>
    <name type="scientific">Hepatitis delta virus genotype I (isolate Woodchuck)</name>
    <name type="common">HDV</name>
    <dbReference type="NCBI Taxonomy" id="31764"/>
    <lineage>
        <taxon>Viruses</taxon>
        <taxon>Ribozyviria</taxon>
        <taxon>Kolmioviridae</taxon>
        <taxon>Deltavirus</taxon>
        <taxon>Hepatitis delta virus</taxon>
    </lineage>
</organism>
<proteinExistence type="inferred from homology"/>
<evidence type="ECO:0000250" key="1"/>
<evidence type="ECO:0000250" key="2">
    <source>
        <dbReference type="UniProtKB" id="P0C6L3"/>
    </source>
</evidence>
<evidence type="ECO:0000250" key="3">
    <source>
        <dbReference type="UniProtKB" id="P29996"/>
    </source>
</evidence>
<evidence type="ECO:0000255" key="4"/>
<evidence type="ECO:0000255" key="5">
    <source>
        <dbReference type="PROSITE-ProRule" id="PRU01183"/>
    </source>
</evidence>
<evidence type="ECO:0000256" key="6">
    <source>
        <dbReference type="SAM" id="MobiDB-lite"/>
    </source>
</evidence>
<evidence type="ECO:0000269" key="7">
    <source>
    </source>
</evidence>
<evidence type="ECO:0000305" key="8"/>
<dbReference type="EMBL" id="M21012">
    <property type="protein sequence ID" value="AAA45723.1"/>
    <property type="status" value="ALT_TERM"/>
    <property type="molecule type" value="Genomic_RNA"/>
</dbReference>
<dbReference type="EMBL" id="AJ307077">
    <property type="protein sequence ID" value="CAC32838.1"/>
    <property type="molecule type" value="Genomic_RNA"/>
</dbReference>
<dbReference type="PIR" id="A30054">
    <property type="entry name" value="SAVLWC"/>
</dbReference>
<dbReference type="SMR" id="P0C6M9"/>
<dbReference type="Proteomes" id="UP000008686">
    <property type="component" value="Segment"/>
</dbReference>
<dbReference type="Proteomes" id="UP000129583">
    <property type="component" value="Genome"/>
</dbReference>
<dbReference type="GO" id="GO:0043657">
    <property type="term" value="C:host cell"/>
    <property type="evidence" value="ECO:0007669"/>
    <property type="project" value="GOC"/>
</dbReference>
<dbReference type="GO" id="GO:0044196">
    <property type="term" value="C:host cell nucleolus"/>
    <property type="evidence" value="ECO:0007669"/>
    <property type="project" value="UniProtKB-SubCell"/>
</dbReference>
<dbReference type="GO" id="GO:0044423">
    <property type="term" value="C:virion component"/>
    <property type="evidence" value="ECO:0007669"/>
    <property type="project" value="UniProtKB-KW"/>
</dbReference>
<dbReference type="GO" id="GO:0003723">
    <property type="term" value="F:RNA binding"/>
    <property type="evidence" value="ECO:0007669"/>
    <property type="project" value="UniProtKB-KW"/>
</dbReference>
<dbReference type="GO" id="GO:0046718">
    <property type="term" value="P:symbiont entry into host cell"/>
    <property type="evidence" value="ECO:0007669"/>
    <property type="project" value="UniProtKB-KW"/>
</dbReference>
<dbReference type="GO" id="GO:0075732">
    <property type="term" value="P:viral penetration into host nucleus"/>
    <property type="evidence" value="ECO:0007669"/>
    <property type="project" value="UniProtKB-KW"/>
</dbReference>
<dbReference type="Gene3D" id="4.10.220.40">
    <property type="entry name" value="Delta antigen, N-terminal"/>
    <property type="match status" value="1"/>
</dbReference>
<dbReference type="InterPro" id="IPR027403">
    <property type="entry name" value="Delta_antigen_N"/>
</dbReference>
<dbReference type="InterPro" id="IPR037517">
    <property type="entry name" value="HDAG_dom"/>
</dbReference>
<dbReference type="InterPro" id="IPR002506">
    <property type="entry name" value="HDV_ag"/>
</dbReference>
<dbReference type="Pfam" id="PF01517">
    <property type="entry name" value="HDV_ag"/>
    <property type="match status" value="1"/>
</dbReference>
<dbReference type="SUPFAM" id="SSF58108">
    <property type="entry name" value="Oligomerization domain of hepatitis delta antigen"/>
    <property type="match status" value="1"/>
</dbReference>
<dbReference type="PROSITE" id="PS51838">
    <property type="entry name" value="HDAG"/>
    <property type="match status" value="1"/>
</dbReference>
<feature type="chain" id="PRO_0000038158" description="Large delta antigen">
    <location>
        <begin position="1"/>
        <end position="211"/>
    </location>
</feature>
<feature type="propeptide" id="PRO_0000396678" description="Removed in mature form" evidence="3">
    <location>
        <begin position="212"/>
        <end position="214"/>
    </location>
</feature>
<feature type="domain" description="HDAg" evidence="5">
    <location>
        <begin position="20"/>
        <end position="195"/>
    </location>
</feature>
<feature type="region of interest" description="Dimerization" evidence="4">
    <location>
        <begin position="12"/>
        <end position="60"/>
    </location>
</feature>
<feature type="region of interest" description="Disordered" evidence="6">
    <location>
        <begin position="45"/>
        <end position="214"/>
    </location>
</feature>
<feature type="region of interest" description="RNA-binding" evidence="5">
    <location>
        <begin position="97"/>
        <end position="107"/>
    </location>
</feature>
<feature type="region of interest" description="RNAPII-binding" evidence="5">
    <location>
        <begin position="130"/>
        <end position="195"/>
    </location>
</feature>
<feature type="region of interest" description="RNA-binding" evidence="5">
    <location>
        <begin position="136"/>
        <end position="146"/>
    </location>
</feature>
<feature type="short sequence motif" description="Nuclear localization signal" evidence="3">
    <location>
        <begin position="66"/>
        <end position="75"/>
    </location>
</feature>
<feature type="compositionally biased region" description="Basic and acidic residues" evidence="6">
    <location>
        <begin position="94"/>
        <end position="112"/>
    </location>
</feature>
<feature type="compositionally biased region" description="Basic and acidic residues" evidence="6">
    <location>
        <begin position="129"/>
        <end position="144"/>
    </location>
</feature>
<feature type="compositionally biased region" description="Gly residues" evidence="6">
    <location>
        <begin position="158"/>
        <end position="167"/>
    </location>
</feature>
<feature type="modified residue" description="Phosphoserine; by host" evidence="3">
    <location>
        <position position="2"/>
    </location>
</feature>
<feature type="modified residue" description="Omega-N-methylated arginine; by host" evidence="2">
    <location>
        <position position="13"/>
    </location>
</feature>
<feature type="modified residue" description="N6-acetyllysine; by host" evidence="2">
    <location>
        <position position="72"/>
    </location>
</feature>
<feature type="modified residue" description="Phosphoserine; by host" evidence="3">
    <location>
        <position position="123"/>
    </location>
</feature>
<feature type="modified residue" description="Phosphoserine; by host" evidence="3">
    <location>
        <position position="177"/>
    </location>
</feature>
<feature type="modified residue" description="Cysteine methyl ester; by host" evidence="3">
    <location>
        <position position="211"/>
    </location>
</feature>
<feature type="lipid moiety-binding region" description="S-farnesyl cysteine; by host" evidence="3">
    <location>
        <position position="211"/>
    </location>
</feature>
<feature type="sequence variant" description="In strain: Isolate Woodchuck5.">
    <original>G</original>
    <variation>R</variation>
    <location>
        <position position="11"/>
    </location>
</feature>
<feature type="sequence variant" description="In strain: Isolate Woodchuck5.">
    <original>R</original>
    <variation>G</variation>
    <location>
        <position position="86"/>
    </location>
</feature>
<feature type="sequence variant" description="In strain: Isolate Woodchuck5.">
    <original>D</original>
    <variation>E</variation>
    <location>
        <position position="96"/>
    </location>
</feature>
<reference key="1">
    <citation type="journal article" date="1988" name="J. Virol.">
        <title>Molecular cloning of hepatitis delta virus RNA from an infected woodchuck liver: sequence, structure, and applications.</title>
        <authorList>
            <person name="Kuo M.Y.P."/>
            <person name="Goldberg J."/>
            <person name="Coates L."/>
            <person name="Mason W."/>
            <person name="Gerin J."/>
            <person name="Taylor J."/>
        </authorList>
    </citation>
    <scope>NUCLEOTIDE SEQUENCE [GENOMIC RNA]</scope>
</reference>
<reference key="2">
    <citation type="journal article" date="1991" name="J. Gen. Virol.">
        <title>Nucleotide sequence analysis of three different hepatitis delta viruses isolated from a woodchuck and humans.</title>
        <authorList>
            <person name="Deny P."/>
            <person name="Zignego A.L."/>
            <person name="Rascalou N."/>
            <person name="Ponzetto A."/>
            <person name="Tiollais P."/>
            <person name="Brechot C."/>
        </authorList>
    </citation>
    <scope>NUCLEOTIDE SEQUENCE [GENOMIC RNA]</scope>
    <scope>RNA EDITING</scope>
    <source>
        <strain>Isolate Woodchuck5</strain>
    </source>
</reference>
<reference key="3">
    <citation type="journal article" date="2005" name="Acta Virol.">
        <title>Hepatitis D.</title>
        <authorList>
            <person name="Husa P."/>
            <person name="Linhartova A."/>
            <person name="Nemecek V."/>
            <person name="Husova L."/>
        </authorList>
    </citation>
    <scope>REVIEW</scope>
</reference>
<reference key="4">
    <citation type="journal article" date="2006" name="Curr. Top. Microbiol. Immunol.">
        <title>Post-translational modification of delta antigen of hepatitis D virus.</title>
        <authorList>
            <person name="Huang W.H."/>
            <person name="Chen C.W."/>
            <person name="Wu H.L."/>
            <person name="Chen P.J."/>
        </authorList>
    </citation>
    <scope>REVIEW</scope>
</reference>